<keyword id="KW-0687">Ribonucleoprotein</keyword>
<keyword id="KW-0689">Ribosomal protein</keyword>
<name>RL35_PARC0</name>
<comment type="similarity">
    <text evidence="1">Belongs to the bacterial ribosomal protein bL35 family.</text>
</comment>
<dbReference type="EMBL" id="CP000512">
    <property type="protein sequence ID" value="ABM33425.1"/>
    <property type="molecule type" value="Genomic_DNA"/>
</dbReference>
<dbReference type="RefSeq" id="WP_011795946.1">
    <property type="nucleotide sequence ID" value="NC_008752.1"/>
</dbReference>
<dbReference type="SMR" id="A1TR37"/>
<dbReference type="STRING" id="397945.Aave_2857"/>
<dbReference type="GeneID" id="79792545"/>
<dbReference type="KEGG" id="aav:Aave_2857"/>
<dbReference type="eggNOG" id="COG0291">
    <property type="taxonomic scope" value="Bacteria"/>
</dbReference>
<dbReference type="HOGENOM" id="CLU_169643_1_0_4"/>
<dbReference type="OrthoDB" id="47476at2"/>
<dbReference type="Proteomes" id="UP000002596">
    <property type="component" value="Chromosome"/>
</dbReference>
<dbReference type="GO" id="GO:0022625">
    <property type="term" value="C:cytosolic large ribosomal subunit"/>
    <property type="evidence" value="ECO:0007669"/>
    <property type="project" value="TreeGrafter"/>
</dbReference>
<dbReference type="GO" id="GO:0003735">
    <property type="term" value="F:structural constituent of ribosome"/>
    <property type="evidence" value="ECO:0007669"/>
    <property type="project" value="InterPro"/>
</dbReference>
<dbReference type="GO" id="GO:0006412">
    <property type="term" value="P:translation"/>
    <property type="evidence" value="ECO:0007669"/>
    <property type="project" value="UniProtKB-UniRule"/>
</dbReference>
<dbReference type="FunFam" id="4.10.410.60:FF:000001">
    <property type="entry name" value="50S ribosomal protein L35"/>
    <property type="match status" value="1"/>
</dbReference>
<dbReference type="Gene3D" id="4.10.410.60">
    <property type="match status" value="1"/>
</dbReference>
<dbReference type="HAMAP" id="MF_00514">
    <property type="entry name" value="Ribosomal_bL35"/>
    <property type="match status" value="1"/>
</dbReference>
<dbReference type="InterPro" id="IPR001706">
    <property type="entry name" value="Ribosomal_bL35"/>
</dbReference>
<dbReference type="InterPro" id="IPR021137">
    <property type="entry name" value="Ribosomal_bL35-like"/>
</dbReference>
<dbReference type="InterPro" id="IPR018265">
    <property type="entry name" value="Ribosomal_bL35_CS"/>
</dbReference>
<dbReference type="InterPro" id="IPR037229">
    <property type="entry name" value="Ribosomal_bL35_sf"/>
</dbReference>
<dbReference type="NCBIfam" id="TIGR00001">
    <property type="entry name" value="rpmI_bact"/>
    <property type="match status" value="1"/>
</dbReference>
<dbReference type="PANTHER" id="PTHR33343">
    <property type="entry name" value="54S RIBOSOMAL PROTEIN BL35M"/>
    <property type="match status" value="1"/>
</dbReference>
<dbReference type="PANTHER" id="PTHR33343:SF1">
    <property type="entry name" value="LARGE RIBOSOMAL SUBUNIT PROTEIN BL35M"/>
    <property type="match status" value="1"/>
</dbReference>
<dbReference type="Pfam" id="PF01632">
    <property type="entry name" value="Ribosomal_L35p"/>
    <property type="match status" value="1"/>
</dbReference>
<dbReference type="PRINTS" id="PR00064">
    <property type="entry name" value="RIBOSOMALL35"/>
</dbReference>
<dbReference type="SUPFAM" id="SSF143034">
    <property type="entry name" value="L35p-like"/>
    <property type="match status" value="1"/>
</dbReference>
<dbReference type="PROSITE" id="PS00936">
    <property type="entry name" value="RIBOSOMAL_L35"/>
    <property type="match status" value="1"/>
</dbReference>
<proteinExistence type="inferred from homology"/>
<sequence length="67" mass="7600">MPKMKTKSSAKKRFRVRPGGTVKRGQAFKRHILTKKTTKNKRHLRGAVSVHETNMGHMAQMLPFAGL</sequence>
<organism>
    <name type="scientific">Paracidovorax citrulli (strain AAC00-1)</name>
    <name type="common">Acidovorax citrulli</name>
    <dbReference type="NCBI Taxonomy" id="397945"/>
    <lineage>
        <taxon>Bacteria</taxon>
        <taxon>Pseudomonadati</taxon>
        <taxon>Pseudomonadota</taxon>
        <taxon>Betaproteobacteria</taxon>
        <taxon>Burkholderiales</taxon>
        <taxon>Comamonadaceae</taxon>
        <taxon>Paracidovorax</taxon>
    </lineage>
</organism>
<evidence type="ECO:0000255" key="1">
    <source>
        <dbReference type="HAMAP-Rule" id="MF_00514"/>
    </source>
</evidence>
<evidence type="ECO:0000256" key="2">
    <source>
        <dbReference type="SAM" id="MobiDB-lite"/>
    </source>
</evidence>
<evidence type="ECO:0000305" key="3"/>
<protein>
    <recommendedName>
        <fullName evidence="1">Large ribosomal subunit protein bL35</fullName>
    </recommendedName>
    <alternativeName>
        <fullName evidence="3">50S ribosomal protein L35</fullName>
    </alternativeName>
</protein>
<gene>
    <name evidence="1" type="primary">rpmI</name>
    <name type="ordered locus">Aave_2857</name>
</gene>
<feature type="chain" id="PRO_1000050645" description="Large ribosomal subunit protein bL35">
    <location>
        <begin position="1"/>
        <end position="67"/>
    </location>
</feature>
<feature type="region of interest" description="Disordered" evidence="2">
    <location>
        <begin position="1"/>
        <end position="24"/>
    </location>
</feature>
<feature type="compositionally biased region" description="Basic residues" evidence="2">
    <location>
        <begin position="1"/>
        <end position="16"/>
    </location>
</feature>
<reference key="1">
    <citation type="submission" date="2006-12" db="EMBL/GenBank/DDBJ databases">
        <title>Complete sequence of Acidovorax avenae subsp. citrulli AAC00-1.</title>
        <authorList>
            <person name="Copeland A."/>
            <person name="Lucas S."/>
            <person name="Lapidus A."/>
            <person name="Barry K."/>
            <person name="Detter J.C."/>
            <person name="Glavina del Rio T."/>
            <person name="Dalin E."/>
            <person name="Tice H."/>
            <person name="Pitluck S."/>
            <person name="Kiss H."/>
            <person name="Brettin T."/>
            <person name="Bruce D."/>
            <person name="Han C."/>
            <person name="Tapia R."/>
            <person name="Gilna P."/>
            <person name="Schmutz J."/>
            <person name="Larimer F."/>
            <person name="Land M."/>
            <person name="Hauser L."/>
            <person name="Kyrpides N."/>
            <person name="Kim E."/>
            <person name="Stahl D."/>
            <person name="Richardson P."/>
        </authorList>
    </citation>
    <scope>NUCLEOTIDE SEQUENCE [LARGE SCALE GENOMIC DNA]</scope>
    <source>
        <strain>AAC00-1</strain>
    </source>
</reference>
<accession>A1TR37</accession>